<protein>
    <recommendedName>
        <fullName>Uncharacterized protein TP_0762</fullName>
    </recommendedName>
</protein>
<accession>O83743</accession>
<organism>
    <name type="scientific">Treponema pallidum (strain Nichols)</name>
    <dbReference type="NCBI Taxonomy" id="243276"/>
    <lineage>
        <taxon>Bacteria</taxon>
        <taxon>Pseudomonadati</taxon>
        <taxon>Spirochaetota</taxon>
        <taxon>Spirochaetia</taxon>
        <taxon>Spirochaetales</taxon>
        <taxon>Treponemataceae</taxon>
        <taxon>Treponema</taxon>
    </lineage>
</organism>
<feature type="chain" id="PRO_0000202317" description="Uncharacterized protein TP_0762">
    <location>
        <begin position="1"/>
        <end position="393"/>
    </location>
</feature>
<feature type="region of interest" description="Disordered" evidence="1">
    <location>
        <begin position="164"/>
        <end position="183"/>
    </location>
</feature>
<feature type="compositionally biased region" description="Polar residues" evidence="1">
    <location>
        <begin position="173"/>
        <end position="183"/>
    </location>
</feature>
<name>Y762_TREPA</name>
<proteinExistence type="predicted"/>
<keyword id="KW-1185">Reference proteome</keyword>
<reference key="1">
    <citation type="journal article" date="1998" name="Science">
        <title>Complete genome sequence of Treponema pallidum, the syphilis spirochete.</title>
        <authorList>
            <person name="Fraser C.M."/>
            <person name="Norris S.J."/>
            <person name="Weinstock G.M."/>
            <person name="White O."/>
            <person name="Sutton G.G."/>
            <person name="Dodson R.J."/>
            <person name="Gwinn M.L."/>
            <person name="Hickey E.K."/>
            <person name="Clayton R.A."/>
            <person name="Ketchum K.A."/>
            <person name="Sodergren E."/>
            <person name="Hardham J.M."/>
            <person name="McLeod M.P."/>
            <person name="Salzberg S.L."/>
            <person name="Peterson J.D."/>
            <person name="Khalak H.G."/>
            <person name="Richardson D.L."/>
            <person name="Howell J.K."/>
            <person name="Chidambaram M."/>
            <person name="Utterback T.R."/>
            <person name="McDonald L.A."/>
            <person name="Artiach P."/>
            <person name="Bowman C."/>
            <person name="Cotton M.D."/>
            <person name="Fujii C."/>
            <person name="Garland S.A."/>
            <person name="Hatch B."/>
            <person name="Horst K."/>
            <person name="Roberts K.M."/>
            <person name="Sandusky M."/>
            <person name="Weidman J.F."/>
            <person name="Smith H.O."/>
            <person name="Venter J.C."/>
        </authorList>
    </citation>
    <scope>NUCLEOTIDE SEQUENCE [LARGE SCALE GENOMIC DNA]</scope>
    <source>
        <strain>Nichols</strain>
    </source>
</reference>
<evidence type="ECO:0000256" key="1">
    <source>
        <dbReference type="SAM" id="MobiDB-lite"/>
    </source>
</evidence>
<sequence>MCSARVTPDVVLLFDPQYWNYLHVARAVAPHALLITDISVFPAVFRLPWEYIVLAGSACPFATSLAHHDASCSPSHALPLPFVAPDLLASGGSVATSAWECARYLGATTIVYIGLDLAFPGARTHFRGALFEERAHLQSGRVAPAETTSFCALHSLPLYPVPAASDPHPGKNSPASPTGENKEQTVLTDARFSLYAVWLEAHLARYTHIKTYALEPAGRRVAGITPLRFSQLVTLLNRSAAVPHCRTMYSRRRRLYSRYRNSSVQVNCTDAVRWRRTMKSTPVHCLGHFTKKKKSAEGARNLWRALRRADTRCASPHNLEHALERTRSFLNAMPLTPTTYENKTHALYTALCTLLPTEPTYRARAHAHLFELLTRTLKFCAAYTEEEGEWREA</sequence>
<dbReference type="EMBL" id="AE000520">
    <property type="protein sequence ID" value="AAC65733.1"/>
    <property type="molecule type" value="Genomic_DNA"/>
</dbReference>
<dbReference type="PIR" id="E71285">
    <property type="entry name" value="E71285"/>
</dbReference>
<dbReference type="RefSeq" id="WP_010882207.1">
    <property type="nucleotide sequence ID" value="NC_000919.1"/>
</dbReference>
<dbReference type="SMR" id="O83743"/>
<dbReference type="STRING" id="243276.TP_0762"/>
<dbReference type="EnsemblBacteria" id="AAC65733">
    <property type="protein sequence ID" value="AAC65733"/>
    <property type="gene ID" value="TP_0762"/>
</dbReference>
<dbReference type="KEGG" id="tpa:TP_0762"/>
<dbReference type="eggNOG" id="COG2604">
    <property type="taxonomic scope" value="Bacteria"/>
</dbReference>
<dbReference type="HOGENOM" id="CLU_756350_0_0_12"/>
<dbReference type="OrthoDB" id="5458680at2"/>
<dbReference type="Proteomes" id="UP000000811">
    <property type="component" value="Chromosome"/>
</dbReference>
<dbReference type="PANTHER" id="PTHR41786:SF1">
    <property type="entry name" value="6-HYDROXYMETHYLPTERIN DIPHOSPHOKINASE MPTE-LIKE DOMAIN-CONTAINING PROTEIN"/>
    <property type="match status" value="1"/>
</dbReference>
<dbReference type="PANTHER" id="PTHR41786">
    <property type="entry name" value="MOTILITY ACCESSORY FACTOR MAF"/>
    <property type="match status" value="1"/>
</dbReference>
<gene>
    <name type="ordered locus">TP_0762</name>
</gene>